<feature type="chain" id="PRO_0000229238" description="Ribosome maturation factor RimP">
    <location>
        <begin position="1"/>
        <end position="152"/>
    </location>
</feature>
<organism>
    <name type="scientific">Francisella tularensis subsp. tularensis (strain SCHU S4 / Schu 4)</name>
    <dbReference type="NCBI Taxonomy" id="177416"/>
    <lineage>
        <taxon>Bacteria</taxon>
        <taxon>Pseudomonadati</taxon>
        <taxon>Pseudomonadota</taxon>
        <taxon>Gammaproteobacteria</taxon>
        <taxon>Thiotrichales</taxon>
        <taxon>Francisellaceae</taxon>
        <taxon>Francisella</taxon>
    </lineage>
</organism>
<protein>
    <recommendedName>
        <fullName evidence="1">Ribosome maturation factor RimP</fullName>
    </recommendedName>
</protein>
<reference key="1">
    <citation type="journal article" date="2005" name="Nat. Genet.">
        <title>The complete genome sequence of Francisella tularensis, the causative agent of tularemia.</title>
        <authorList>
            <person name="Larsson P."/>
            <person name="Oyston P.C.F."/>
            <person name="Chain P."/>
            <person name="Chu M.C."/>
            <person name="Duffield M."/>
            <person name="Fuxelius H.-H."/>
            <person name="Garcia E."/>
            <person name="Haelltorp G."/>
            <person name="Johansson D."/>
            <person name="Isherwood K.E."/>
            <person name="Karp P.D."/>
            <person name="Larsson E."/>
            <person name="Liu Y."/>
            <person name="Michell S."/>
            <person name="Prior J."/>
            <person name="Prior R."/>
            <person name="Malfatti S."/>
            <person name="Sjoestedt A."/>
            <person name="Svensson K."/>
            <person name="Thompson N."/>
            <person name="Vergez L."/>
            <person name="Wagg J.K."/>
            <person name="Wren B.W."/>
            <person name="Lindler L.E."/>
            <person name="Andersson S.G.E."/>
            <person name="Forsman M."/>
            <person name="Titball R.W."/>
        </authorList>
    </citation>
    <scope>NUCLEOTIDE SEQUENCE [LARGE SCALE GENOMIC DNA]</scope>
    <source>
        <strain>SCHU S4 / Schu 4</strain>
    </source>
</reference>
<proteinExistence type="inferred from homology"/>
<accession>Q5NIL9</accession>
<name>RIMP_FRATT</name>
<evidence type="ECO:0000255" key="1">
    <source>
        <dbReference type="HAMAP-Rule" id="MF_01077"/>
    </source>
</evidence>
<dbReference type="EMBL" id="AJ749949">
    <property type="protein sequence ID" value="CAG44681.1"/>
    <property type="molecule type" value="Genomic_DNA"/>
</dbReference>
<dbReference type="RefSeq" id="YP_169123.1">
    <property type="nucleotide sequence ID" value="NC_006570.2"/>
</dbReference>
<dbReference type="SMR" id="Q5NIL9"/>
<dbReference type="STRING" id="177416.FTT_0048"/>
<dbReference type="DNASU" id="3192150"/>
<dbReference type="EnsemblBacteria" id="CAG44681">
    <property type="protein sequence ID" value="CAG44681"/>
    <property type="gene ID" value="FTT_0048"/>
</dbReference>
<dbReference type="KEGG" id="ftu:FTT_0048"/>
<dbReference type="PATRIC" id="fig|177416.18.peg.53"/>
<dbReference type="eggNOG" id="COG0779">
    <property type="taxonomic scope" value="Bacteria"/>
</dbReference>
<dbReference type="OrthoDB" id="9805006at2"/>
<dbReference type="Proteomes" id="UP000001174">
    <property type="component" value="Chromosome"/>
</dbReference>
<dbReference type="GO" id="GO:0005829">
    <property type="term" value="C:cytosol"/>
    <property type="evidence" value="ECO:0007669"/>
    <property type="project" value="TreeGrafter"/>
</dbReference>
<dbReference type="GO" id="GO:0000028">
    <property type="term" value="P:ribosomal small subunit assembly"/>
    <property type="evidence" value="ECO:0007669"/>
    <property type="project" value="TreeGrafter"/>
</dbReference>
<dbReference type="GO" id="GO:0006412">
    <property type="term" value="P:translation"/>
    <property type="evidence" value="ECO:0007669"/>
    <property type="project" value="TreeGrafter"/>
</dbReference>
<dbReference type="CDD" id="cd01734">
    <property type="entry name" value="YlxS_C"/>
    <property type="match status" value="1"/>
</dbReference>
<dbReference type="FunFam" id="3.30.300.70:FF:000001">
    <property type="entry name" value="Ribosome maturation factor RimP"/>
    <property type="match status" value="1"/>
</dbReference>
<dbReference type="Gene3D" id="2.30.30.180">
    <property type="entry name" value="Ribosome maturation factor RimP, C-terminal domain"/>
    <property type="match status" value="1"/>
</dbReference>
<dbReference type="Gene3D" id="3.30.300.70">
    <property type="entry name" value="RimP-like superfamily, N-terminal"/>
    <property type="match status" value="1"/>
</dbReference>
<dbReference type="HAMAP" id="MF_01077">
    <property type="entry name" value="RimP"/>
    <property type="match status" value="1"/>
</dbReference>
<dbReference type="InterPro" id="IPR003728">
    <property type="entry name" value="Ribosome_maturation_RimP"/>
</dbReference>
<dbReference type="InterPro" id="IPR028998">
    <property type="entry name" value="RimP_C"/>
</dbReference>
<dbReference type="InterPro" id="IPR036847">
    <property type="entry name" value="RimP_C_sf"/>
</dbReference>
<dbReference type="InterPro" id="IPR028989">
    <property type="entry name" value="RimP_N"/>
</dbReference>
<dbReference type="InterPro" id="IPR035956">
    <property type="entry name" value="RimP_N_sf"/>
</dbReference>
<dbReference type="NCBIfam" id="NF011226">
    <property type="entry name" value="PRK14633.1"/>
    <property type="match status" value="1"/>
</dbReference>
<dbReference type="PANTHER" id="PTHR33867">
    <property type="entry name" value="RIBOSOME MATURATION FACTOR RIMP"/>
    <property type="match status" value="1"/>
</dbReference>
<dbReference type="PANTHER" id="PTHR33867:SF1">
    <property type="entry name" value="RIBOSOME MATURATION FACTOR RIMP"/>
    <property type="match status" value="1"/>
</dbReference>
<dbReference type="Pfam" id="PF17384">
    <property type="entry name" value="DUF150_C"/>
    <property type="match status" value="1"/>
</dbReference>
<dbReference type="Pfam" id="PF02576">
    <property type="entry name" value="RimP_N"/>
    <property type="match status" value="1"/>
</dbReference>
<dbReference type="SUPFAM" id="SSF74942">
    <property type="entry name" value="YhbC-like, C-terminal domain"/>
    <property type="match status" value="1"/>
</dbReference>
<dbReference type="SUPFAM" id="SSF75420">
    <property type="entry name" value="YhbC-like, N-terminal domain"/>
    <property type="match status" value="1"/>
</dbReference>
<keyword id="KW-0963">Cytoplasm</keyword>
<keyword id="KW-1185">Reference proteome</keyword>
<keyword id="KW-0690">Ribosome biogenesis</keyword>
<comment type="function">
    <text evidence="1">Required for maturation of 30S ribosomal subunits.</text>
</comment>
<comment type="subcellular location">
    <subcellularLocation>
        <location evidence="1">Cytoplasm</location>
    </subcellularLocation>
</comment>
<comment type="similarity">
    <text evidence="1">Belongs to the RimP family.</text>
</comment>
<gene>
    <name evidence="1" type="primary">rimP</name>
    <name type="ordered locus">FTT_0048</name>
</gene>
<sequence length="152" mass="16806">MKMLLDDLYEIVEPITADLGYILWGIEVVGSGKLTIRIFIDHENGVSVDDCQIVSKEISAVFDVEDPVSGKYILEVSSPGMNRQIFNIIQAQALVGFNVKAVTLAPVGSQTKFKGVLERVEGNNVILNLEDGKEISFDFDELKKLRVSPDFS</sequence>